<evidence type="ECO:0000255" key="1">
    <source>
        <dbReference type="HAMAP-Rule" id="MF_01382"/>
    </source>
</evidence>
<evidence type="ECO:0000256" key="2">
    <source>
        <dbReference type="SAM" id="MobiDB-lite"/>
    </source>
</evidence>
<evidence type="ECO:0000269" key="3">
    <source>
    </source>
</evidence>
<evidence type="ECO:0000305" key="4"/>
<name>SECA1_MYCS2</name>
<organism>
    <name type="scientific">Mycolicibacterium smegmatis (strain ATCC 700084 / mc(2)155)</name>
    <name type="common">Mycobacterium smegmatis</name>
    <dbReference type="NCBI Taxonomy" id="246196"/>
    <lineage>
        <taxon>Bacteria</taxon>
        <taxon>Bacillati</taxon>
        <taxon>Actinomycetota</taxon>
        <taxon>Actinomycetes</taxon>
        <taxon>Mycobacteriales</taxon>
        <taxon>Mycobacteriaceae</taxon>
        <taxon>Mycolicibacterium</taxon>
    </lineage>
</organism>
<dbReference type="EC" id="7.4.2.8" evidence="1"/>
<dbReference type="EMBL" id="U66081">
    <property type="protein sequence ID" value="AAB06754.1"/>
    <property type="molecule type" value="Genomic_DNA"/>
</dbReference>
<dbReference type="EMBL" id="CP000480">
    <property type="protein sequence ID" value="ABK74020.1"/>
    <property type="molecule type" value="Genomic_DNA"/>
</dbReference>
<dbReference type="EMBL" id="CP001663">
    <property type="protein sequence ID" value="AFP38312.1"/>
    <property type="molecule type" value="Genomic_DNA"/>
</dbReference>
<dbReference type="RefSeq" id="YP_886246.1">
    <property type="nucleotide sequence ID" value="NC_008596.1"/>
</dbReference>
<dbReference type="SMR" id="P71533"/>
<dbReference type="STRING" id="246196.MSMEG_1881"/>
<dbReference type="PaxDb" id="246196-MSMEI_1840"/>
<dbReference type="KEGG" id="msb:LJ00_09385"/>
<dbReference type="KEGG" id="msg:MSMEI_1840"/>
<dbReference type="KEGG" id="msm:MSMEG_1881"/>
<dbReference type="PATRIC" id="fig|246196.19.peg.1862"/>
<dbReference type="eggNOG" id="COG0653">
    <property type="taxonomic scope" value="Bacteria"/>
</dbReference>
<dbReference type="OrthoDB" id="9805579at2"/>
<dbReference type="BRENDA" id="7.4.2.5">
    <property type="organism ID" value="3445"/>
</dbReference>
<dbReference type="Proteomes" id="UP000000757">
    <property type="component" value="Chromosome"/>
</dbReference>
<dbReference type="Proteomes" id="UP000006158">
    <property type="component" value="Chromosome"/>
</dbReference>
<dbReference type="GO" id="GO:0031522">
    <property type="term" value="C:cell envelope Sec protein transport complex"/>
    <property type="evidence" value="ECO:0007669"/>
    <property type="project" value="TreeGrafter"/>
</dbReference>
<dbReference type="GO" id="GO:0005829">
    <property type="term" value="C:cytosol"/>
    <property type="evidence" value="ECO:0007669"/>
    <property type="project" value="TreeGrafter"/>
</dbReference>
<dbReference type="GO" id="GO:0005886">
    <property type="term" value="C:plasma membrane"/>
    <property type="evidence" value="ECO:0007669"/>
    <property type="project" value="UniProtKB-SubCell"/>
</dbReference>
<dbReference type="GO" id="GO:0005524">
    <property type="term" value="F:ATP binding"/>
    <property type="evidence" value="ECO:0007669"/>
    <property type="project" value="UniProtKB-UniRule"/>
</dbReference>
<dbReference type="GO" id="GO:0008564">
    <property type="term" value="F:protein-exporting ATPase activity"/>
    <property type="evidence" value="ECO:0007669"/>
    <property type="project" value="UniProtKB-EC"/>
</dbReference>
<dbReference type="GO" id="GO:0065002">
    <property type="term" value="P:intracellular protein transmembrane transport"/>
    <property type="evidence" value="ECO:0007669"/>
    <property type="project" value="UniProtKB-UniRule"/>
</dbReference>
<dbReference type="GO" id="GO:0017038">
    <property type="term" value="P:protein import"/>
    <property type="evidence" value="ECO:0007669"/>
    <property type="project" value="InterPro"/>
</dbReference>
<dbReference type="GO" id="GO:0006605">
    <property type="term" value="P:protein targeting"/>
    <property type="evidence" value="ECO:0007669"/>
    <property type="project" value="UniProtKB-UniRule"/>
</dbReference>
<dbReference type="GO" id="GO:0043952">
    <property type="term" value="P:protein transport by the Sec complex"/>
    <property type="evidence" value="ECO:0007669"/>
    <property type="project" value="TreeGrafter"/>
</dbReference>
<dbReference type="CDD" id="cd17928">
    <property type="entry name" value="DEXDc_SecA"/>
    <property type="match status" value="1"/>
</dbReference>
<dbReference type="CDD" id="cd18803">
    <property type="entry name" value="SF2_C_secA"/>
    <property type="match status" value="1"/>
</dbReference>
<dbReference type="FunFam" id="1.10.3060.10:FF:000002">
    <property type="entry name" value="Preprotein translocase subunit SecA"/>
    <property type="match status" value="1"/>
</dbReference>
<dbReference type="FunFam" id="3.40.50.300:FF:000113">
    <property type="entry name" value="Preprotein translocase subunit SecA"/>
    <property type="match status" value="1"/>
</dbReference>
<dbReference type="FunFam" id="3.40.50.300:FF:000334">
    <property type="entry name" value="Protein translocase subunit SecA"/>
    <property type="match status" value="1"/>
</dbReference>
<dbReference type="FunFam" id="3.90.1440.10:FF:000002">
    <property type="entry name" value="Protein translocase subunit SecA"/>
    <property type="match status" value="1"/>
</dbReference>
<dbReference type="Gene3D" id="1.10.3060.10">
    <property type="entry name" value="Helical scaffold and wing domains of SecA"/>
    <property type="match status" value="1"/>
</dbReference>
<dbReference type="Gene3D" id="3.40.50.300">
    <property type="entry name" value="P-loop containing nucleotide triphosphate hydrolases"/>
    <property type="match status" value="2"/>
</dbReference>
<dbReference type="Gene3D" id="3.90.1440.10">
    <property type="entry name" value="SecA, preprotein cross-linking domain"/>
    <property type="match status" value="1"/>
</dbReference>
<dbReference type="HAMAP" id="MF_01382">
    <property type="entry name" value="SecA"/>
    <property type="match status" value="1"/>
</dbReference>
<dbReference type="InterPro" id="IPR014001">
    <property type="entry name" value="Helicase_ATP-bd"/>
</dbReference>
<dbReference type="InterPro" id="IPR001650">
    <property type="entry name" value="Helicase_C-like"/>
</dbReference>
<dbReference type="InterPro" id="IPR027417">
    <property type="entry name" value="P-loop_NTPase"/>
</dbReference>
<dbReference type="InterPro" id="IPR000185">
    <property type="entry name" value="SecA"/>
</dbReference>
<dbReference type="InterPro" id="IPR020937">
    <property type="entry name" value="SecA_CS"/>
</dbReference>
<dbReference type="InterPro" id="IPR011115">
    <property type="entry name" value="SecA_DEAD"/>
</dbReference>
<dbReference type="InterPro" id="IPR014018">
    <property type="entry name" value="SecA_motor_DEAD"/>
</dbReference>
<dbReference type="InterPro" id="IPR011130">
    <property type="entry name" value="SecA_preprotein_X-link_dom"/>
</dbReference>
<dbReference type="InterPro" id="IPR044722">
    <property type="entry name" value="SecA_SF2_C"/>
</dbReference>
<dbReference type="InterPro" id="IPR011116">
    <property type="entry name" value="SecA_Wing/Scaffold"/>
</dbReference>
<dbReference type="InterPro" id="IPR036266">
    <property type="entry name" value="SecA_Wing/Scaffold_sf"/>
</dbReference>
<dbReference type="InterPro" id="IPR036670">
    <property type="entry name" value="SecA_X-link_sf"/>
</dbReference>
<dbReference type="NCBIfam" id="NF009538">
    <property type="entry name" value="PRK12904.1"/>
    <property type="match status" value="1"/>
</dbReference>
<dbReference type="NCBIfam" id="TIGR00963">
    <property type="entry name" value="secA"/>
    <property type="match status" value="1"/>
</dbReference>
<dbReference type="PANTHER" id="PTHR30612:SF0">
    <property type="entry name" value="CHLOROPLAST PROTEIN-TRANSPORTING ATPASE"/>
    <property type="match status" value="1"/>
</dbReference>
<dbReference type="PANTHER" id="PTHR30612">
    <property type="entry name" value="SECA INNER MEMBRANE COMPONENT OF SEC PROTEIN SECRETION SYSTEM"/>
    <property type="match status" value="1"/>
</dbReference>
<dbReference type="Pfam" id="PF21090">
    <property type="entry name" value="P-loop_SecA"/>
    <property type="match status" value="1"/>
</dbReference>
<dbReference type="Pfam" id="PF07517">
    <property type="entry name" value="SecA_DEAD"/>
    <property type="match status" value="1"/>
</dbReference>
<dbReference type="Pfam" id="PF01043">
    <property type="entry name" value="SecA_PP_bind"/>
    <property type="match status" value="1"/>
</dbReference>
<dbReference type="Pfam" id="PF07516">
    <property type="entry name" value="SecA_SW"/>
    <property type="match status" value="1"/>
</dbReference>
<dbReference type="PRINTS" id="PR00906">
    <property type="entry name" value="SECA"/>
</dbReference>
<dbReference type="SMART" id="SM00957">
    <property type="entry name" value="SecA_DEAD"/>
    <property type="match status" value="1"/>
</dbReference>
<dbReference type="SMART" id="SM00958">
    <property type="entry name" value="SecA_PP_bind"/>
    <property type="match status" value="1"/>
</dbReference>
<dbReference type="SUPFAM" id="SSF81886">
    <property type="entry name" value="Helical scaffold and wing domains of SecA"/>
    <property type="match status" value="1"/>
</dbReference>
<dbReference type="SUPFAM" id="SSF52540">
    <property type="entry name" value="P-loop containing nucleoside triphosphate hydrolases"/>
    <property type="match status" value="2"/>
</dbReference>
<dbReference type="SUPFAM" id="SSF81767">
    <property type="entry name" value="Pre-protein crosslinking domain of SecA"/>
    <property type="match status" value="1"/>
</dbReference>
<dbReference type="PROSITE" id="PS01312">
    <property type="entry name" value="SECA"/>
    <property type="match status" value="1"/>
</dbReference>
<dbReference type="PROSITE" id="PS51196">
    <property type="entry name" value="SECA_MOTOR_DEAD"/>
    <property type="match status" value="1"/>
</dbReference>
<protein>
    <recommendedName>
        <fullName evidence="1">Protein translocase subunit SecA 1</fullName>
        <ecNumber evidence="1">7.4.2.8</ecNumber>
    </recommendedName>
</protein>
<comment type="function">
    <text evidence="1">Part of the Sec protein translocase complex. Interacts with the SecYEG preprotein conducting channel. Has a central role in coupling the hydrolysis of ATP to the transfer of proteins into and across the cell membrane, serving as an ATP-driven molecular motor driving the stepwise translocation of polypeptide chains across the membrane.</text>
</comment>
<comment type="catalytic activity">
    <reaction evidence="1">
        <text>ATP + H2O + cellular proteinSide 1 = ADP + phosphate + cellular proteinSide 2.</text>
        <dbReference type="EC" id="7.4.2.8"/>
    </reaction>
</comment>
<comment type="subunit">
    <text evidence="1">Monomer and homodimer. Part of the essential Sec protein translocation apparatus which comprises SecA, SecYEG and auxiliary proteins SecDF. Other proteins may also be involved.</text>
</comment>
<comment type="subcellular location">
    <subcellularLocation>
        <location evidence="1">Cell membrane</location>
        <topology evidence="1">Peripheral membrane protein</topology>
        <orientation evidence="1">Cytoplasmic side</orientation>
    </subcellularLocation>
    <subcellularLocation>
        <location evidence="1">Cytoplasm</location>
    </subcellularLocation>
    <text evidence="1">Distribution is 50-50.</text>
</comment>
<comment type="disruption phenotype">
    <text evidence="3">Essential, it cannot be disrupted.</text>
</comment>
<comment type="similarity">
    <text evidence="1">Belongs to the SecA family.</text>
</comment>
<accession>P71533</accession>
<accession>A0QTK8</accession>
<accession>I7FYZ8</accession>
<feature type="chain" id="PRO_0000109597" description="Protein translocase subunit SecA 1">
    <location>
        <begin position="1"/>
        <end position="953"/>
    </location>
</feature>
<feature type="region of interest" description="Disordered" evidence="2">
    <location>
        <begin position="854"/>
        <end position="953"/>
    </location>
</feature>
<feature type="compositionally biased region" description="Low complexity" evidence="2">
    <location>
        <begin position="854"/>
        <end position="867"/>
    </location>
</feature>
<feature type="compositionally biased region" description="Basic and acidic residues" evidence="2">
    <location>
        <begin position="929"/>
        <end position="947"/>
    </location>
</feature>
<feature type="binding site" evidence="1">
    <location>
        <position position="83"/>
    </location>
    <ligand>
        <name>ATP</name>
        <dbReference type="ChEBI" id="CHEBI:30616"/>
    </ligand>
</feature>
<feature type="binding site" evidence="1">
    <location>
        <begin position="101"/>
        <end position="105"/>
    </location>
    <ligand>
        <name>ATP</name>
        <dbReference type="ChEBI" id="CHEBI:30616"/>
    </ligand>
</feature>
<feature type="binding site" evidence="1">
    <location>
        <position position="490"/>
    </location>
    <ligand>
        <name>ATP</name>
        <dbReference type="ChEBI" id="CHEBI:30616"/>
    </ligand>
</feature>
<feature type="sequence conflict" description="In Ref. 1; AAB06754." evidence="4" ref="1">
    <original>H</original>
    <variation>HVGVH</variation>
    <location>
        <position position="260"/>
    </location>
</feature>
<feature type="sequence conflict" description="In Ref. 1; AAB06754." evidence="4" ref="1">
    <original>E</original>
    <variation>K</variation>
    <location>
        <position position="752"/>
    </location>
</feature>
<feature type="sequence conflict" description="In Ref. 1; AAB06754." evidence="4" ref="1">
    <original>K</original>
    <variation>Q</variation>
    <location>
        <position position="775"/>
    </location>
</feature>
<feature type="sequence conflict" description="In Ref. 1; AAB06754." evidence="4" ref="1">
    <original>DG</original>
    <variation>ER</variation>
    <location>
        <begin position="908"/>
        <end position="909"/>
    </location>
</feature>
<feature type="sequence conflict" description="In Ref. 1; AAB06754." evidence="4" ref="1">
    <original>Q</original>
    <variation>H</variation>
    <location>
        <position position="912"/>
    </location>
</feature>
<keyword id="KW-0067">ATP-binding</keyword>
<keyword id="KW-1003">Cell membrane</keyword>
<keyword id="KW-0963">Cytoplasm</keyword>
<keyword id="KW-0472">Membrane</keyword>
<keyword id="KW-0547">Nucleotide-binding</keyword>
<keyword id="KW-0653">Protein transport</keyword>
<keyword id="KW-1185">Reference proteome</keyword>
<keyword id="KW-1278">Translocase</keyword>
<keyword id="KW-0811">Translocation</keyword>
<keyword id="KW-0813">Transport</keyword>
<proteinExistence type="evidence at protein level"/>
<gene>
    <name evidence="1" type="primary">secA1</name>
    <name type="ordered locus">MSMEG_1881</name>
    <name type="ordered locus">MSMEI_1840</name>
</gene>
<reference key="1">
    <citation type="journal article" date="2001" name="J. Bacteriol.">
        <title>Two nonredundant SecA homologues function in mycobacteria.</title>
        <authorList>
            <person name="Braunstein M."/>
            <person name="Brown A.M."/>
            <person name="Kurtz S."/>
            <person name="Jacobs W.R. Jr."/>
        </authorList>
    </citation>
    <scope>NUCLEOTIDE SEQUENCE [GENOMIC DNA]</scope>
    <scope>DISRUPTION PHENOTYPE</scope>
    <source>
        <strain>ATCC 700084 / mc(2)155</strain>
    </source>
</reference>
<reference key="2">
    <citation type="submission" date="2006-10" db="EMBL/GenBank/DDBJ databases">
        <authorList>
            <person name="Fleischmann R.D."/>
            <person name="Dodson R.J."/>
            <person name="Haft D.H."/>
            <person name="Merkel J.S."/>
            <person name="Nelson W.C."/>
            <person name="Fraser C.M."/>
        </authorList>
    </citation>
    <scope>NUCLEOTIDE SEQUENCE [LARGE SCALE GENOMIC DNA]</scope>
    <source>
        <strain>ATCC 700084 / mc(2)155</strain>
    </source>
</reference>
<reference key="3">
    <citation type="journal article" date="2007" name="Genome Biol.">
        <title>Interrupted coding sequences in Mycobacterium smegmatis: authentic mutations or sequencing errors?</title>
        <authorList>
            <person name="Deshayes C."/>
            <person name="Perrodou E."/>
            <person name="Gallien S."/>
            <person name="Euphrasie D."/>
            <person name="Schaeffer C."/>
            <person name="Van-Dorsselaer A."/>
            <person name="Poch O."/>
            <person name="Lecompte O."/>
            <person name="Reyrat J.-M."/>
        </authorList>
    </citation>
    <scope>NUCLEOTIDE SEQUENCE [LARGE SCALE GENOMIC DNA]</scope>
    <source>
        <strain>ATCC 700084 / mc(2)155</strain>
    </source>
</reference>
<reference key="4">
    <citation type="journal article" date="2009" name="Genome Res.">
        <title>Ortho-proteogenomics: multiple proteomes investigation through orthology and a new MS-based protocol.</title>
        <authorList>
            <person name="Gallien S."/>
            <person name="Perrodou E."/>
            <person name="Carapito C."/>
            <person name="Deshayes C."/>
            <person name="Reyrat J.-M."/>
            <person name="Van Dorsselaer A."/>
            <person name="Poch O."/>
            <person name="Schaeffer C."/>
            <person name="Lecompte O."/>
        </authorList>
    </citation>
    <scope>NUCLEOTIDE SEQUENCE [LARGE SCALE GENOMIC DNA]</scope>
    <scope>IDENTIFICATION BY MASS SPECTROMETRY [LARGE SCALE ANALYSIS]</scope>
    <source>
        <strain>ATCC 700084 / mc(2)155</strain>
    </source>
</reference>
<sequence length="953" mass="106488">MLSKLLRLGEGRMVKRLRKVADYVNALSDDVEKLSDAELRAKTEEFKKRVADGEDLDDLLPEAFAVAREAAWRVLNQRHFDVQVMGGAALHFGNVAEMKTGEGKTLTAVLPSYLNALSGKGVHVVTVNDYLARRDSEWMGRVHRFLGLDVGVILSGMTPDERRAAYAADITYGTNNEFGFDYLRDNMAHSVDDMVQRGHNFAIVDEVDSILIDEARTPLIISGPADGASHWYQEFARIVPMMEKDVHYEVDLRKRTVGVHELGVEFVEDQLGIDNLYEAANSPLVSYLNNALKAKELFQRDKDYIVRNGEVLIVDEFTGRVLMGRRYNEGMHQAIEAKERVEIKAENQTLATITLQNYFRLYDKLSGMTGTAETEAAELHEIYKLGVVPIPTNKPMVRQDQSDLIYKTEEAKFLAVVDDVAERHAKGQPVLIGTTSVERSEYLSKMLTKRRVPHNVLNAKYHEQEANIIAEAGRRGAVTVATNMAGRGTDIVLGGNVDFLADKRLRERGLDPVETPEEYEAAWHEVLPQVKAECAKEAEQVIEAGGLYVLGTERHESRRIDNQLRGRSGRQGDPGESRFYLSLGDELMRRFNGATLETLLTRLNLPDDVPIEAKMVSRAIKSAQTQVEQQNFEVRKNVLKYDEVMNQQRKVIYAERRRILEGENLAEQAHKMLVDVITAYVDGATAEGYAEDWDLETLWTALKTLYPVGIDHRDLIDSDAVGEPGELTREELLDALIKDAERAYAEREKQIEAIAGEGAMRQLERNVLLNVIDRKWREHLYEMDYLKEGIGLRAMAQRDPLVEYQREGYDMFVGMLEALKEESVGFLFNVQVEAAPQQPQVAPQAPPPTLSEFAAAAAAKASDSAAKPDSGSVATKERAEAERPAPALRAKGIDNEAPPLTYTGPSEDGTAQVQRSGNGGRHAAPAGGSRRERREAARKQAKADRPAKSHRKG</sequence>